<sequence length="1278" mass="137667">MNGDGAREGDSVSHEPSTSKSPKEGEETKKEEKSEEKANTVPFYKLFAFADSSDVLLMICGSIGAIGNGMSLPFMTLLFGDLIDSFGKNQNNKDIVDVVSKVCLKFVYLGLGTLGAAFLQVACWMITGERQAARIRSTYLKTILRQDIGFFDVETNTGEVVGRMSGDTVLIQDAMGEKVGKFIQLVSTFVGGFVLAFIKGWLLTLVMLTSIPLLAMAGAAMALIVTRASSRGQAAYAKAATVVEQTIGSIRTVASFTGEKQAINSYKKFITSAYKSSIQQGFSTGLGLGVMFFVFFSSYALAIWFGGKMILEKGYTGGAVINVIIIVVAGSMSLGQTSPCVTAFAAGQAAAYKMFETIKRKPLIDAYDVNGKVLEDIRGDIELKDVHFSYPARPDEEIFDGFSLFIPSGATAALVGESGSGKSTVISLIERFYDPKSGAVLIDGVNLKEFQLKWIRSKIGLVSQEPVLFSSSIMENIAYGKENATVEEIKAATELANAAKFIDKLPQGLDTMVGEHGTQLSGGQKQRIAIARAILKDPRILLLDEATSALDAESERVVQEALDRVMVNRTTVIVAHRLSTVRNADMIAVIHRGKMVEKGSHSELLKDSEGAYSQLIRLQEINKDVKTSELSSGSSFRNSNLKKSMEGTSSVGNSSRHHSLNVLGLTTGLDLGSHSQRAGQDETGTASQEPLPKVSLTRIAALNKPEIPVLLLGTVAAAINGAIFPLFGILISRVIEAFFKPAHELKRDSRFWAIIFVALGVTSLIVSPTQMYLFAVAGGKLIRRIRSMCFEKAVHMEVAWFDEPQNSSGTMGARLSADATLIRALVGDALSLAVQNVASAASGLIIAFTASWELALIILVMLPLIGINGFVQVKFMKGFSADAKSKYEEASQVANDAVGSIRTVASFCAEEKVMQMYKKQCEGPIKDGIKQGFISGLGFGFSFFILFCVYATSFYAGARLVEDGKTTFNNVFQVFFALTMAAIGISQSSTFAPDSSKAKVAAASIFAIIDRKSKIDSSDETGTVLENVKGDIELRHLSFTYPARPDIQIFRDLCLTIRAGKTVALVGESGSGKSTVISLLQRFYDPDSGHITLDGVELKKLQLKWLRQQMGLVGQEPVLFNDTIRANIAYGKGSEEAATESEIIAAAELANAHKFISSIQQGYDTVVGERGIQLSGGQKQRVAIARAIVKEPKILLLDEATSALDAESERVVQDALDRVMVNRTTIVVAHRLSTIKNADVIAVVKNGVIAEKGTHETLIKIEGGVYASLVQLHMTASN</sequence>
<dbReference type="EMBL" id="AC022521">
    <property type="protein sequence ID" value="AAG10628.1"/>
    <property type="molecule type" value="Genomic_DNA"/>
</dbReference>
<dbReference type="EMBL" id="CP002684">
    <property type="protein sequence ID" value="AEE27440.1"/>
    <property type="molecule type" value="Genomic_DNA"/>
</dbReference>
<dbReference type="EMBL" id="CP002684">
    <property type="protein sequence ID" value="ANM60098.1"/>
    <property type="molecule type" value="Genomic_DNA"/>
</dbReference>
<dbReference type="EMBL" id="CP002684">
    <property type="protein sequence ID" value="ANM60099.1"/>
    <property type="molecule type" value="Genomic_DNA"/>
</dbReference>
<dbReference type="PIR" id="E86155">
    <property type="entry name" value="E86155"/>
</dbReference>
<dbReference type="RefSeq" id="NP_001322407.1">
    <property type="nucleotide sequence ID" value="NM_001331343.1"/>
</dbReference>
<dbReference type="RefSeq" id="NP_001322408.1">
    <property type="nucleotide sequence ID" value="NM_001331342.1"/>
</dbReference>
<dbReference type="RefSeq" id="NP_171753.1">
    <property type="nucleotide sequence ID" value="NM_100133.3"/>
</dbReference>
<dbReference type="SMR" id="Q9FWX7"/>
<dbReference type="BioGRID" id="24588">
    <property type="interactions" value="4"/>
</dbReference>
<dbReference type="FunCoup" id="Q9FWX7">
    <property type="interactions" value="512"/>
</dbReference>
<dbReference type="STRING" id="3702.Q9FWX7"/>
<dbReference type="GlyCosmos" id="Q9FWX7">
    <property type="glycosylation" value="6 sites, No reported glycans"/>
</dbReference>
<dbReference type="GlyGen" id="Q9FWX7">
    <property type="glycosylation" value="6 sites"/>
</dbReference>
<dbReference type="iPTMnet" id="Q9FWX7"/>
<dbReference type="PaxDb" id="3702-AT1G02520.1"/>
<dbReference type="ProteomicsDB" id="245152"/>
<dbReference type="EnsemblPlants" id="AT1G02520.1">
    <property type="protein sequence ID" value="AT1G02520.1"/>
    <property type="gene ID" value="AT1G02520"/>
</dbReference>
<dbReference type="EnsemblPlants" id="AT1G02520.2">
    <property type="protein sequence ID" value="AT1G02520.2"/>
    <property type="gene ID" value="AT1G02520"/>
</dbReference>
<dbReference type="EnsemblPlants" id="AT1G02520.3">
    <property type="protein sequence ID" value="AT1G02520.3"/>
    <property type="gene ID" value="AT1G02520"/>
</dbReference>
<dbReference type="GeneID" id="839353"/>
<dbReference type="Gramene" id="AT1G02520.1">
    <property type="protein sequence ID" value="AT1G02520.1"/>
    <property type="gene ID" value="AT1G02520"/>
</dbReference>
<dbReference type="Gramene" id="AT1G02520.2">
    <property type="protein sequence ID" value="AT1G02520.2"/>
    <property type="gene ID" value="AT1G02520"/>
</dbReference>
<dbReference type="Gramene" id="AT1G02520.3">
    <property type="protein sequence ID" value="AT1G02520.3"/>
    <property type="gene ID" value="AT1G02520"/>
</dbReference>
<dbReference type="KEGG" id="ath:AT1G02520"/>
<dbReference type="Araport" id="AT1G02520"/>
<dbReference type="TAIR" id="AT1G02520">
    <property type="gene designation" value="ABCB11"/>
</dbReference>
<dbReference type="eggNOG" id="KOG0055">
    <property type="taxonomic scope" value="Eukaryota"/>
</dbReference>
<dbReference type="HOGENOM" id="CLU_000604_17_2_1"/>
<dbReference type="InParanoid" id="Q9FWX7"/>
<dbReference type="OMA" id="TMSARYA"/>
<dbReference type="PhylomeDB" id="Q9FWX7"/>
<dbReference type="BioCyc" id="ARA:AT1G02520-MONOMER"/>
<dbReference type="PRO" id="PR:Q9FWX7"/>
<dbReference type="Proteomes" id="UP000006548">
    <property type="component" value="Chromosome 1"/>
</dbReference>
<dbReference type="ExpressionAtlas" id="Q9FWX7">
    <property type="expression patterns" value="baseline and differential"/>
</dbReference>
<dbReference type="GO" id="GO:0005576">
    <property type="term" value="C:extracellular region"/>
    <property type="evidence" value="ECO:0007005"/>
    <property type="project" value="TAIR"/>
</dbReference>
<dbReference type="GO" id="GO:0005886">
    <property type="term" value="C:plasma membrane"/>
    <property type="evidence" value="ECO:0007005"/>
    <property type="project" value="TAIR"/>
</dbReference>
<dbReference type="GO" id="GO:0009506">
    <property type="term" value="C:plasmodesma"/>
    <property type="evidence" value="ECO:0007005"/>
    <property type="project" value="TAIR"/>
</dbReference>
<dbReference type="GO" id="GO:0140359">
    <property type="term" value="F:ABC-type transporter activity"/>
    <property type="evidence" value="ECO:0007669"/>
    <property type="project" value="InterPro"/>
</dbReference>
<dbReference type="GO" id="GO:0005524">
    <property type="term" value="F:ATP binding"/>
    <property type="evidence" value="ECO:0007669"/>
    <property type="project" value="UniProtKB-KW"/>
</dbReference>
<dbReference type="GO" id="GO:0016887">
    <property type="term" value="F:ATP hydrolysis activity"/>
    <property type="evidence" value="ECO:0007669"/>
    <property type="project" value="InterPro"/>
</dbReference>
<dbReference type="CDD" id="cd18577">
    <property type="entry name" value="ABC_6TM_Pgp_ABCB1_D1_like"/>
    <property type="match status" value="1"/>
</dbReference>
<dbReference type="CDD" id="cd18578">
    <property type="entry name" value="ABC_6TM_Pgp_ABCB1_D2_like"/>
    <property type="match status" value="1"/>
</dbReference>
<dbReference type="CDD" id="cd03249">
    <property type="entry name" value="ABC_MTABC3_MDL1_MDL2"/>
    <property type="match status" value="2"/>
</dbReference>
<dbReference type="FunFam" id="1.20.1560.10:FF:000009">
    <property type="entry name" value="ABC transporter B family member 1"/>
    <property type="match status" value="1"/>
</dbReference>
<dbReference type="FunFam" id="3.40.50.300:FF:000066">
    <property type="entry name" value="ABC transporter B family member 1"/>
    <property type="match status" value="2"/>
</dbReference>
<dbReference type="FunFam" id="1.20.1560.10:FF:000025">
    <property type="entry name" value="ABC transporter B family member 9"/>
    <property type="match status" value="1"/>
</dbReference>
<dbReference type="FunFam" id="1.20.1560.10:FF:000044">
    <property type="entry name" value="ABC transporter B family member 9"/>
    <property type="match status" value="1"/>
</dbReference>
<dbReference type="Gene3D" id="1.20.1560.10">
    <property type="entry name" value="ABC transporter type 1, transmembrane domain"/>
    <property type="match status" value="1"/>
</dbReference>
<dbReference type="Gene3D" id="3.40.50.300">
    <property type="entry name" value="P-loop containing nucleotide triphosphate hydrolases"/>
    <property type="match status" value="2"/>
</dbReference>
<dbReference type="InterPro" id="IPR003593">
    <property type="entry name" value="AAA+_ATPase"/>
</dbReference>
<dbReference type="InterPro" id="IPR011527">
    <property type="entry name" value="ABC1_TM_dom"/>
</dbReference>
<dbReference type="InterPro" id="IPR036640">
    <property type="entry name" value="ABC1_TM_sf"/>
</dbReference>
<dbReference type="InterPro" id="IPR003439">
    <property type="entry name" value="ABC_transporter-like_ATP-bd"/>
</dbReference>
<dbReference type="InterPro" id="IPR017871">
    <property type="entry name" value="ABC_transporter-like_CS"/>
</dbReference>
<dbReference type="InterPro" id="IPR027417">
    <property type="entry name" value="P-loop_NTPase"/>
</dbReference>
<dbReference type="InterPro" id="IPR039421">
    <property type="entry name" value="Type_1_exporter"/>
</dbReference>
<dbReference type="PANTHER" id="PTHR43394:SF16">
    <property type="entry name" value="ABC TRANSPORTER B FAMILY MEMBER 4-LIKE ISOFORM X1"/>
    <property type="match status" value="1"/>
</dbReference>
<dbReference type="PANTHER" id="PTHR43394">
    <property type="entry name" value="ATP-DEPENDENT PERMEASE MDL1, MITOCHONDRIAL"/>
    <property type="match status" value="1"/>
</dbReference>
<dbReference type="Pfam" id="PF00664">
    <property type="entry name" value="ABC_membrane"/>
    <property type="match status" value="2"/>
</dbReference>
<dbReference type="Pfam" id="PF00005">
    <property type="entry name" value="ABC_tran"/>
    <property type="match status" value="2"/>
</dbReference>
<dbReference type="SMART" id="SM00382">
    <property type="entry name" value="AAA"/>
    <property type="match status" value="2"/>
</dbReference>
<dbReference type="SUPFAM" id="SSF90123">
    <property type="entry name" value="ABC transporter transmembrane region"/>
    <property type="match status" value="2"/>
</dbReference>
<dbReference type="SUPFAM" id="SSF52540">
    <property type="entry name" value="P-loop containing nucleoside triphosphate hydrolases"/>
    <property type="match status" value="2"/>
</dbReference>
<dbReference type="PROSITE" id="PS50929">
    <property type="entry name" value="ABC_TM1F"/>
    <property type="match status" value="2"/>
</dbReference>
<dbReference type="PROSITE" id="PS00211">
    <property type="entry name" value="ABC_TRANSPORTER_1"/>
    <property type="match status" value="2"/>
</dbReference>
<dbReference type="PROSITE" id="PS50893">
    <property type="entry name" value="ABC_TRANSPORTER_2"/>
    <property type="match status" value="2"/>
</dbReference>
<evidence type="ECO:0000255" key="1">
    <source>
        <dbReference type="PROSITE-ProRule" id="PRU00434"/>
    </source>
</evidence>
<evidence type="ECO:0000255" key="2">
    <source>
        <dbReference type="PROSITE-ProRule" id="PRU00441"/>
    </source>
</evidence>
<evidence type="ECO:0000255" key="3">
    <source>
        <dbReference type="PROSITE-ProRule" id="PRU00498"/>
    </source>
</evidence>
<evidence type="ECO:0000256" key="4">
    <source>
        <dbReference type="SAM" id="MobiDB-lite"/>
    </source>
</evidence>
<evidence type="ECO:0000269" key="5">
    <source>
    </source>
</evidence>
<evidence type="ECO:0000303" key="6">
    <source>
    </source>
</evidence>
<evidence type="ECO:0000303" key="7">
    <source>
    </source>
</evidence>
<evidence type="ECO:0000305" key="8"/>
<evidence type="ECO:0000305" key="9">
    <source>
    </source>
</evidence>
<evidence type="ECO:0000312" key="10">
    <source>
        <dbReference type="Araport" id="AT1G02520"/>
    </source>
</evidence>
<evidence type="ECO:0000312" key="11">
    <source>
        <dbReference type="EMBL" id="AAG10628.1"/>
    </source>
</evidence>
<keyword id="KW-0067">ATP-binding</keyword>
<keyword id="KW-0325">Glycoprotein</keyword>
<keyword id="KW-0472">Membrane</keyword>
<keyword id="KW-0547">Nucleotide-binding</keyword>
<keyword id="KW-1185">Reference proteome</keyword>
<keyword id="KW-0677">Repeat</keyword>
<keyword id="KW-0812">Transmembrane</keyword>
<keyword id="KW-1133">Transmembrane helix</keyword>
<keyword id="KW-0813">Transport</keyword>
<comment type="function">
    <text evidence="5">Involved in the regulation of auxin transport required for pistil elongation.</text>
</comment>
<comment type="catalytic activity">
    <reaction evidence="9">
        <text>(indol-3-yl)acetate(in) + ATP + H2O = (indol-3-yl)acetate(out) + ADP + phosphate + H(+)</text>
        <dbReference type="Rhea" id="RHEA:84235"/>
        <dbReference type="ChEBI" id="CHEBI:15377"/>
        <dbReference type="ChEBI" id="CHEBI:15378"/>
        <dbReference type="ChEBI" id="CHEBI:30616"/>
        <dbReference type="ChEBI" id="CHEBI:30854"/>
        <dbReference type="ChEBI" id="CHEBI:43474"/>
        <dbReference type="ChEBI" id="CHEBI:456216"/>
    </reaction>
    <physiologicalReaction direction="left-to-right" evidence="9">
        <dbReference type="Rhea" id="RHEA:84236"/>
    </physiologicalReaction>
</comment>
<comment type="subcellular location">
    <subcellularLocation>
        <location evidence="2">Membrane</location>
        <topology evidence="2">Multi-pass membrane protein</topology>
    </subcellularLocation>
</comment>
<comment type="tissue specificity">
    <text evidence="5">Present in roots and flower buds.</text>
</comment>
<comment type="developmental stage">
    <text evidence="5">In roots, mainly observed in tips and, to a lesser extent, in mature roots outside of the vasculature (PubMed:35528937). Also present in unopened flowers (PubMed:35528937).</text>
</comment>
<comment type="disruption phenotype">
    <text evidence="5">Slight defects in primary root elongation (PubMed:35528937). Increased incidence of root waving and skewing in response to mechanical perturbation and directional light (PubMed:35528937). Reduced pistils length in the abcb1 abcb11 abcb19 triple mutant compared to the double mutant abcb1 abcb19 (PubMed:35528937).</text>
</comment>
<comment type="similarity">
    <text evidence="8">Belongs to the ABC transporter superfamily. ABCB family. Multidrug resistance exporter (TC 3.A.1.201) subfamily.</text>
</comment>
<name>AB11B_ARATH</name>
<organism>
    <name type="scientific">Arabidopsis thaliana</name>
    <name type="common">Mouse-ear cress</name>
    <dbReference type="NCBI Taxonomy" id="3702"/>
    <lineage>
        <taxon>Eukaryota</taxon>
        <taxon>Viridiplantae</taxon>
        <taxon>Streptophyta</taxon>
        <taxon>Embryophyta</taxon>
        <taxon>Tracheophyta</taxon>
        <taxon>Spermatophyta</taxon>
        <taxon>Magnoliopsida</taxon>
        <taxon>eudicotyledons</taxon>
        <taxon>Gunneridae</taxon>
        <taxon>Pentapetalae</taxon>
        <taxon>rosids</taxon>
        <taxon>malvids</taxon>
        <taxon>Brassicales</taxon>
        <taxon>Brassicaceae</taxon>
        <taxon>Camelineae</taxon>
        <taxon>Arabidopsis</taxon>
    </lineage>
</organism>
<proteinExistence type="evidence at transcript level"/>
<feature type="chain" id="PRO_0000227919" description="ABC transporter B family member 11">
    <location>
        <begin position="1"/>
        <end position="1278"/>
    </location>
</feature>
<feature type="transmembrane region" description="Helical" evidence="2">
    <location>
        <begin position="55"/>
        <end position="75"/>
    </location>
</feature>
<feature type="transmembrane region" description="Helical" evidence="2">
    <location>
        <begin position="106"/>
        <end position="126"/>
    </location>
</feature>
<feature type="transmembrane region" description="Helical" evidence="2">
    <location>
        <begin position="182"/>
        <end position="202"/>
    </location>
</feature>
<feature type="transmembrane region" description="Helical" evidence="2">
    <location>
        <begin position="205"/>
        <end position="225"/>
    </location>
</feature>
<feature type="transmembrane region" description="Helical" evidence="2">
    <location>
        <begin position="285"/>
        <end position="305"/>
    </location>
</feature>
<feature type="transmembrane region" description="Helical" evidence="2">
    <location>
        <begin position="314"/>
        <end position="334"/>
    </location>
</feature>
<feature type="transmembrane region" description="Helical" evidence="2">
    <location>
        <begin position="711"/>
        <end position="731"/>
    </location>
</feature>
<feature type="transmembrane region" description="Helical" evidence="2">
    <location>
        <begin position="751"/>
        <end position="771"/>
    </location>
</feature>
<feature type="transmembrane region" description="Helical" evidence="2">
    <location>
        <begin position="824"/>
        <end position="844"/>
    </location>
</feature>
<feature type="transmembrane region" description="Helical" evidence="2">
    <location>
        <begin position="845"/>
        <end position="865"/>
    </location>
</feature>
<feature type="transmembrane region" description="Helical" evidence="2">
    <location>
        <begin position="932"/>
        <end position="952"/>
    </location>
</feature>
<feature type="transmembrane region" description="Helical" evidence="2">
    <location>
        <begin position="971"/>
        <end position="991"/>
    </location>
</feature>
<feature type="domain" description="ABC transmembrane type-1 1" evidence="2">
    <location>
        <begin position="58"/>
        <end position="346"/>
    </location>
</feature>
<feature type="domain" description="ABC transporter 1" evidence="1">
    <location>
        <begin position="381"/>
        <end position="617"/>
    </location>
</feature>
<feature type="domain" description="ABC transmembrane type-1 2" evidence="2">
    <location>
        <begin position="710"/>
        <end position="997"/>
    </location>
</feature>
<feature type="domain" description="ABC transporter 2" evidence="1">
    <location>
        <begin position="1032"/>
        <end position="1271"/>
    </location>
</feature>
<feature type="region of interest" description="Disordered" evidence="4">
    <location>
        <begin position="1"/>
        <end position="35"/>
    </location>
</feature>
<feature type="region of interest" description="Disordered" evidence="4">
    <location>
        <begin position="629"/>
        <end position="656"/>
    </location>
</feature>
<feature type="compositionally biased region" description="Basic and acidic residues" evidence="4">
    <location>
        <begin position="1"/>
        <end position="13"/>
    </location>
</feature>
<feature type="compositionally biased region" description="Basic and acidic residues" evidence="4">
    <location>
        <begin position="21"/>
        <end position="35"/>
    </location>
</feature>
<feature type="compositionally biased region" description="Polar residues" evidence="4">
    <location>
        <begin position="629"/>
        <end position="654"/>
    </location>
</feature>
<feature type="binding site" evidence="1">
    <location>
        <begin position="416"/>
        <end position="423"/>
    </location>
    <ligand>
        <name>ATP</name>
        <dbReference type="ChEBI" id="CHEBI:30616"/>
        <label>1</label>
    </ligand>
</feature>
<feature type="binding site" evidence="1">
    <location>
        <begin position="1067"/>
        <end position="1074"/>
    </location>
    <ligand>
        <name>ATP</name>
        <dbReference type="ChEBI" id="CHEBI:30616"/>
        <label>2</label>
    </ligand>
</feature>
<feature type="glycosylation site" description="N-linked (GlcNAc...) asparagine" evidence="3">
    <location>
        <position position="483"/>
    </location>
</feature>
<feature type="glycosylation site" description="N-linked (GlcNAc...) asparagine" evidence="3">
    <location>
        <position position="568"/>
    </location>
</feature>
<feature type="glycosylation site" description="N-linked (GlcNAc...) asparagine" evidence="3">
    <location>
        <position position="653"/>
    </location>
</feature>
<feature type="glycosylation site" description="N-linked (GlcNAc...) asparagine" evidence="3">
    <location>
        <position position="806"/>
    </location>
</feature>
<feature type="glycosylation site" description="N-linked (GlcNAc...) asparagine" evidence="3">
    <location>
        <position position="1121"/>
    </location>
</feature>
<feature type="glycosylation site" description="N-linked (GlcNAc...) asparagine" evidence="3">
    <location>
        <position position="1222"/>
    </location>
</feature>
<reference key="1">
    <citation type="journal article" date="2000" name="Nature">
        <title>Sequence and analysis of chromosome 1 of the plant Arabidopsis thaliana.</title>
        <authorList>
            <person name="Theologis A."/>
            <person name="Ecker J.R."/>
            <person name="Palm C.J."/>
            <person name="Federspiel N.A."/>
            <person name="Kaul S."/>
            <person name="White O."/>
            <person name="Alonso J."/>
            <person name="Altafi H."/>
            <person name="Araujo R."/>
            <person name="Bowman C.L."/>
            <person name="Brooks S.Y."/>
            <person name="Buehler E."/>
            <person name="Chan A."/>
            <person name="Chao Q."/>
            <person name="Chen H."/>
            <person name="Cheuk R.F."/>
            <person name="Chin C.W."/>
            <person name="Chung M.K."/>
            <person name="Conn L."/>
            <person name="Conway A.B."/>
            <person name="Conway A.R."/>
            <person name="Creasy T.H."/>
            <person name="Dewar K."/>
            <person name="Dunn P."/>
            <person name="Etgu P."/>
            <person name="Feldblyum T.V."/>
            <person name="Feng J.-D."/>
            <person name="Fong B."/>
            <person name="Fujii C.Y."/>
            <person name="Gill J.E."/>
            <person name="Goldsmith A.D."/>
            <person name="Haas B."/>
            <person name="Hansen N.F."/>
            <person name="Hughes B."/>
            <person name="Huizar L."/>
            <person name="Hunter J.L."/>
            <person name="Jenkins J."/>
            <person name="Johnson-Hopson C."/>
            <person name="Khan S."/>
            <person name="Khaykin E."/>
            <person name="Kim C.J."/>
            <person name="Koo H.L."/>
            <person name="Kremenetskaia I."/>
            <person name="Kurtz D.B."/>
            <person name="Kwan A."/>
            <person name="Lam B."/>
            <person name="Langin-Hooper S."/>
            <person name="Lee A."/>
            <person name="Lee J.M."/>
            <person name="Lenz C.A."/>
            <person name="Li J.H."/>
            <person name="Li Y.-P."/>
            <person name="Lin X."/>
            <person name="Liu S.X."/>
            <person name="Liu Z.A."/>
            <person name="Luros J.S."/>
            <person name="Maiti R."/>
            <person name="Marziali A."/>
            <person name="Militscher J."/>
            <person name="Miranda M."/>
            <person name="Nguyen M."/>
            <person name="Nierman W.C."/>
            <person name="Osborne B.I."/>
            <person name="Pai G."/>
            <person name="Peterson J."/>
            <person name="Pham P.K."/>
            <person name="Rizzo M."/>
            <person name="Rooney T."/>
            <person name="Rowley D."/>
            <person name="Sakano H."/>
            <person name="Salzberg S.L."/>
            <person name="Schwartz J.R."/>
            <person name="Shinn P."/>
            <person name="Southwick A.M."/>
            <person name="Sun H."/>
            <person name="Tallon L.J."/>
            <person name="Tambunga G."/>
            <person name="Toriumi M.J."/>
            <person name="Town C.D."/>
            <person name="Utterback T."/>
            <person name="Van Aken S."/>
            <person name="Vaysberg M."/>
            <person name="Vysotskaia V.S."/>
            <person name="Walker M."/>
            <person name="Wu D."/>
            <person name="Yu G."/>
            <person name="Fraser C.M."/>
            <person name="Venter J.C."/>
            <person name="Davis R.W."/>
        </authorList>
    </citation>
    <scope>NUCLEOTIDE SEQUENCE [LARGE SCALE GENOMIC DNA]</scope>
    <source>
        <strain>cv. Columbia</strain>
    </source>
</reference>
<reference key="2">
    <citation type="journal article" date="2017" name="Plant J.">
        <title>Araport11: a complete reannotation of the Arabidopsis thaliana reference genome.</title>
        <authorList>
            <person name="Cheng C.Y."/>
            <person name="Krishnakumar V."/>
            <person name="Chan A.P."/>
            <person name="Thibaud-Nissen F."/>
            <person name="Schobel S."/>
            <person name="Town C.D."/>
        </authorList>
    </citation>
    <scope>GENOME REANNOTATION</scope>
    <source>
        <strain>cv. Columbia</strain>
    </source>
</reference>
<reference key="3">
    <citation type="journal article" date="2001" name="J. Biol. Chem.">
        <title>The Arabidopsis thaliana ABC protein superfamily, a complete inventory.</title>
        <authorList>
            <person name="Sanchez-Fernandez R."/>
            <person name="Davies T.G."/>
            <person name="Coleman J.O."/>
            <person name="Rea P.A."/>
        </authorList>
    </citation>
    <scope>GENE FAMILY</scope>
    <scope>NOMENCLATURE</scope>
</reference>
<reference key="4">
    <citation type="journal article" date="2008" name="Trends Plant Sci.">
        <title>Plant ABC proteins - a unified nomenclature and updated inventory.</title>
        <authorList>
            <person name="Verrier P.J."/>
            <person name="Bird D."/>
            <person name="Burla B."/>
            <person name="Dassa E."/>
            <person name="Forestier C."/>
            <person name="Geisler M."/>
            <person name="Klein M."/>
            <person name="Kolukisaoglu H.U."/>
            <person name="Lee Y."/>
            <person name="Martinoia E."/>
            <person name="Murphy A."/>
            <person name="Rea P.A."/>
            <person name="Samuels L."/>
            <person name="Schulz B."/>
            <person name="Spalding E.J."/>
            <person name="Yazaki K."/>
            <person name="Theodoulou F.L."/>
        </authorList>
    </citation>
    <scope>GENE FAMILY</scope>
    <scope>NOMENCLATURE</scope>
</reference>
<reference key="5">
    <citation type="journal article" date="2022" name="Front. Plant Sci.">
        <title>Loss of multiple ABCB auxin transporters recapitulates the major twisted dwarf 1 phenotypes in Arabidopsis thaliana.</title>
        <authorList>
            <person name="Jenness M.K."/>
            <person name="Tayengwa R."/>
            <person name="Bate G.A."/>
            <person name="Tapken W."/>
            <person name="Zhang Y."/>
            <person name="Pang C."/>
            <person name="Murphy A.S."/>
        </authorList>
    </citation>
    <scope>FUNCTION</scope>
    <scope>DISRUPTION PHENOTYPE</scope>
    <scope>TISSUE SPECIFICITY</scope>
    <scope>DEVELOPMENTAL STAGE</scope>
    <scope>TRANSPORTER ACTIVITY</scope>
    <source>
        <strain>cv. Columbia</strain>
    </source>
</reference>
<gene>
    <name evidence="7" type="primary">ABCB11</name>
    <name evidence="6" type="synonym">MDR8</name>
    <name type="synonym">PGP11</name>
    <name evidence="10" type="ordered locus">At1g02520</name>
    <name evidence="11" type="ORF">T14P4.15</name>
</gene>
<protein>
    <recommendedName>
        <fullName evidence="7">ABC transporter B family member 11</fullName>
        <shortName evidence="7">ABC transporter ABCB.11</shortName>
        <shortName evidence="7">AtABCB11</shortName>
    </recommendedName>
    <alternativeName>
        <fullName evidence="6">Multidrug resistance protein 8</fullName>
        <shortName evidence="6">AtMDR8</shortName>
    </alternativeName>
    <alternativeName>
        <fullName>P-glycoprotein 11</fullName>
    </alternativeName>
    <alternativeName>
        <fullName evidence="9">Probable auxin exporter ABCB11</fullName>
    </alternativeName>
</protein>
<accession>Q9FWX7</accession>